<gene>
    <name evidence="1" type="primary">purT</name>
    <name type="ordered locus">SPC_1833</name>
</gene>
<proteinExistence type="inferred from homology"/>
<organism>
    <name type="scientific">Salmonella paratyphi C (strain RKS4594)</name>
    <dbReference type="NCBI Taxonomy" id="476213"/>
    <lineage>
        <taxon>Bacteria</taxon>
        <taxon>Pseudomonadati</taxon>
        <taxon>Pseudomonadota</taxon>
        <taxon>Gammaproteobacteria</taxon>
        <taxon>Enterobacterales</taxon>
        <taxon>Enterobacteriaceae</taxon>
        <taxon>Salmonella</taxon>
    </lineage>
</organism>
<feature type="chain" id="PRO_1000186894" description="Formate-dependent phosphoribosylglycinamide formyltransferase">
    <location>
        <begin position="1"/>
        <end position="392"/>
    </location>
</feature>
<feature type="domain" description="ATP-grasp" evidence="1">
    <location>
        <begin position="119"/>
        <end position="308"/>
    </location>
</feature>
<feature type="binding site" evidence="1">
    <location>
        <begin position="22"/>
        <end position="23"/>
    </location>
    <ligand>
        <name>N(1)-(5-phospho-beta-D-ribosyl)glycinamide</name>
        <dbReference type="ChEBI" id="CHEBI:143788"/>
    </ligand>
</feature>
<feature type="binding site" evidence="1">
    <location>
        <position position="82"/>
    </location>
    <ligand>
        <name>N(1)-(5-phospho-beta-D-ribosyl)glycinamide</name>
        <dbReference type="ChEBI" id="CHEBI:143788"/>
    </ligand>
</feature>
<feature type="binding site" evidence="1">
    <location>
        <position position="114"/>
    </location>
    <ligand>
        <name>ATP</name>
        <dbReference type="ChEBI" id="CHEBI:30616"/>
    </ligand>
</feature>
<feature type="binding site" evidence="1">
    <location>
        <position position="155"/>
    </location>
    <ligand>
        <name>ATP</name>
        <dbReference type="ChEBI" id="CHEBI:30616"/>
    </ligand>
</feature>
<feature type="binding site" evidence="1">
    <location>
        <begin position="160"/>
        <end position="165"/>
    </location>
    <ligand>
        <name>ATP</name>
        <dbReference type="ChEBI" id="CHEBI:30616"/>
    </ligand>
</feature>
<feature type="binding site" evidence="1">
    <location>
        <begin position="195"/>
        <end position="198"/>
    </location>
    <ligand>
        <name>ATP</name>
        <dbReference type="ChEBI" id="CHEBI:30616"/>
    </ligand>
</feature>
<feature type="binding site" evidence="1">
    <location>
        <position position="203"/>
    </location>
    <ligand>
        <name>ATP</name>
        <dbReference type="ChEBI" id="CHEBI:30616"/>
    </ligand>
</feature>
<feature type="binding site" evidence="1">
    <location>
        <position position="267"/>
    </location>
    <ligand>
        <name>Mg(2+)</name>
        <dbReference type="ChEBI" id="CHEBI:18420"/>
    </ligand>
</feature>
<feature type="binding site" evidence="1">
    <location>
        <position position="279"/>
    </location>
    <ligand>
        <name>Mg(2+)</name>
        <dbReference type="ChEBI" id="CHEBI:18420"/>
    </ligand>
</feature>
<feature type="binding site" evidence="1">
    <location>
        <position position="286"/>
    </location>
    <ligand>
        <name>N(1)-(5-phospho-beta-D-ribosyl)glycinamide</name>
        <dbReference type="ChEBI" id="CHEBI:143788"/>
    </ligand>
</feature>
<feature type="binding site" evidence="1">
    <location>
        <position position="355"/>
    </location>
    <ligand>
        <name>N(1)-(5-phospho-beta-D-ribosyl)glycinamide</name>
        <dbReference type="ChEBI" id="CHEBI:143788"/>
    </ligand>
</feature>
<feature type="binding site" evidence="1">
    <location>
        <begin position="362"/>
        <end position="363"/>
    </location>
    <ligand>
        <name>N(1)-(5-phospho-beta-D-ribosyl)glycinamide</name>
        <dbReference type="ChEBI" id="CHEBI:143788"/>
    </ligand>
</feature>
<name>PURT_SALPC</name>
<protein>
    <recommendedName>
        <fullName evidence="1">Formate-dependent phosphoribosylglycinamide formyltransferase</fullName>
        <ecNumber evidence="1">6.3.1.21</ecNumber>
    </recommendedName>
    <alternativeName>
        <fullName evidence="1">5'-phosphoribosylglycinamide transformylase 2</fullName>
    </alternativeName>
    <alternativeName>
        <fullName evidence="1">Formate-dependent GAR transformylase</fullName>
    </alternativeName>
    <alternativeName>
        <fullName evidence="1">GAR transformylase 2</fullName>
        <shortName evidence="1">GART 2</shortName>
    </alternativeName>
    <alternativeName>
        <fullName evidence="1">Non-folate glycinamide ribonucleotide transformylase</fullName>
    </alternativeName>
    <alternativeName>
        <fullName evidence="1">Phosphoribosylglycinamide formyltransferase 2</fullName>
    </alternativeName>
</protein>
<dbReference type="EC" id="6.3.1.21" evidence="1"/>
<dbReference type="EMBL" id="CP000857">
    <property type="protein sequence ID" value="ACN45971.1"/>
    <property type="molecule type" value="Genomic_DNA"/>
</dbReference>
<dbReference type="RefSeq" id="WP_000173416.1">
    <property type="nucleotide sequence ID" value="NC_012125.1"/>
</dbReference>
<dbReference type="SMR" id="C0Q2G8"/>
<dbReference type="KEGG" id="sei:SPC_1833"/>
<dbReference type="HOGENOM" id="CLU_011534_1_3_6"/>
<dbReference type="UniPathway" id="UPA00074">
    <property type="reaction ID" value="UER00127"/>
</dbReference>
<dbReference type="Proteomes" id="UP000001599">
    <property type="component" value="Chromosome"/>
</dbReference>
<dbReference type="GO" id="GO:0005829">
    <property type="term" value="C:cytosol"/>
    <property type="evidence" value="ECO:0007669"/>
    <property type="project" value="TreeGrafter"/>
</dbReference>
<dbReference type="GO" id="GO:0005524">
    <property type="term" value="F:ATP binding"/>
    <property type="evidence" value="ECO:0007669"/>
    <property type="project" value="UniProtKB-UniRule"/>
</dbReference>
<dbReference type="GO" id="GO:0000287">
    <property type="term" value="F:magnesium ion binding"/>
    <property type="evidence" value="ECO:0007669"/>
    <property type="project" value="InterPro"/>
</dbReference>
<dbReference type="GO" id="GO:0043815">
    <property type="term" value="F:phosphoribosylglycinamide formyltransferase 2 activity"/>
    <property type="evidence" value="ECO:0007669"/>
    <property type="project" value="UniProtKB-UniRule"/>
</dbReference>
<dbReference type="GO" id="GO:0004644">
    <property type="term" value="F:phosphoribosylglycinamide formyltransferase activity"/>
    <property type="evidence" value="ECO:0007669"/>
    <property type="project" value="InterPro"/>
</dbReference>
<dbReference type="GO" id="GO:0006189">
    <property type="term" value="P:'de novo' IMP biosynthetic process"/>
    <property type="evidence" value="ECO:0007669"/>
    <property type="project" value="UniProtKB-UniRule"/>
</dbReference>
<dbReference type="FunFam" id="3.30.1490.20:FF:000013">
    <property type="entry name" value="Formate-dependent phosphoribosylglycinamide formyltransferase"/>
    <property type="match status" value="1"/>
</dbReference>
<dbReference type="FunFam" id="3.30.470.20:FF:000027">
    <property type="entry name" value="Formate-dependent phosphoribosylglycinamide formyltransferase"/>
    <property type="match status" value="1"/>
</dbReference>
<dbReference type="FunFam" id="3.40.50.20:FF:000007">
    <property type="entry name" value="Formate-dependent phosphoribosylglycinamide formyltransferase"/>
    <property type="match status" value="1"/>
</dbReference>
<dbReference type="Gene3D" id="3.40.50.20">
    <property type="match status" value="1"/>
</dbReference>
<dbReference type="Gene3D" id="3.30.1490.20">
    <property type="entry name" value="ATP-grasp fold, A domain"/>
    <property type="match status" value="1"/>
</dbReference>
<dbReference type="Gene3D" id="3.30.470.20">
    <property type="entry name" value="ATP-grasp fold, B domain"/>
    <property type="match status" value="1"/>
</dbReference>
<dbReference type="HAMAP" id="MF_01643">
    <property type="entry name" value="PurT"/>
    <property type="match status" value="1"/>
</dbReference>
<dbReference type="InterPro" id="IPR011761">
    <property type="entry name" value="ATP-grasp"/>
</dbReference>
<dbReference type="InterPro" id="IPR003135">
    <property type="entry name" value="ATP-grasp_carboxylate-amine"/>
</dbReference>
<dbReference type="InterPro" id="IPR013815">
    <property type="entry name" value="ATP_grasp_subdomain_1"/>
</dbReference>
<dbReference type="InterPro" id="IPR016185">
    <property type="entry name" value="PreATP-grasp_dom_sf"/>
</dbReference>
<dbReference type="InterPro" id="IPR005862">
    <property type="entry name" value="PurT"/>
</dbReference>
<dbReference type="InterPro" id="IPR054350">
    <property type="entry name" value="PurT/PurK_preATP-grasp"/>
</dbReference>
<dbReference type="InterPro" id="IPR048740">
    <property type="entry name" value="PurT_C"/>
</dbReference>
<dbReference type="InterPro" id="IPR011054">
    <property type="entry name" value="Rudment_hybrid_motif"/>
</dbReference>
<dbReference type="NCBIfam" id="NF006766">
    <property type="entry name" value="PRK09288.1"/>
    <property type="match status" value="1"/>
</dbReference>
<dbReference type="NCBIfam" id="TIGR01142">
    <property type="entry name" value="purT"/>
    <property type="match status" value="1"/>
</dbReference>
<dbReference type="PANTHER" id="PTHR43055">
    <property type="entry name" value="FORMATE-DEPENDENT PHOSPHORIBOSYLGLYCINAMIDE FORMYLTRANSFERASE"/>
    <property type="match status" value="1"/>
</dbReference>
<dbReference type="PANTHER" id="PTHR43055:SF1">
    <property type="entry name" value="FORMATE-DEPENDENT PHOSPHORIBOSYLGLYCINAMIDE FORMYLTRANSFERASE"/>
    <property type="match status" value="1"/>
</dbReference>
<dbReference type="Pfam" id="PF02222">
    <property type="entry name" value="ATP-grasp"/>
    <property type="match status" value="1"/>
</dbReference>
<dbReference type="Pfam" id="PF21244">
    <property type="entry name" value="PurT_C"/>
    <property type="match status" value="1"/>
</dbReference>
<dbReference type="Pfam" id="PF22660">
    <property type="entry name" value="RS_preATP-grasp-like"/>
    <property type="match status" value="1"/>
</dbReference>
<dbReference type="SUPFAM" id="SSF56059">
    <property type="entry name" value="Glutathione synthetase ATP-binding domain-like"/>
    <property type="match status" value="1"/>
</dbReference>
<dbReference type="SUPFAM" id="SSF52440">
    <property type="entry name" value="PreATP-grasp domain"/>
    <property type="match status" value="1"/>
</dbReference>
<dbReference type="SUPFAM" id="SSF51246">
    <property type="entry name" value="Rudiment single hybrid motif"/>
    <property type="match status" value="1"/>
</dbReference>
<dbReference type="PROSITE" id="PS50975">
    <property type="entry name" value="ATP_GRASP"/>
    <property type="match status" value="1"/>
</dbReference>
<keyword id="KW-0067">ATP-binding</keyword>
<keyword id="KW-0436">Ligase</keyword>
<keyword id="KW-0460">Magnesium</keyword>
<keyword id="KW-0479">Metal-binding</keyword>
<keyword id="KW-0547">Nucleotide-binding</keyword>
<keyword id="KW-0658">Purine biosynthesis</keyword>
<accession>C0Q2G8</accession>
<comment type="function">
    <text evidence="1">Involved in the de novo purine biosynthesis. Catalyzes the transfer of formate to 5-phospho-ribosyl-glycinamide (GAR), producing 5-phospho-ribosyl-N-formylglycinamide (FGAR). Formate is provided by PurU via hydrolysis of 10-formyl-tetrahydrofolate.</text>
</comment>
<comment type="catalytic activity">
    <reaction evidence="1">
        <text>N(1)-(5-phospho-beta-D-ribosyl)glycinamide + formate + ATP = N(2)-formyl-N(1)-(5-phospho-beta-D-ribosyl)glycinamide + ADP + phosphate + H(+)</text>
        <dbReference type="Rhea" id="RHEA:24829"/>
        <dbReference type="ChEBI" id="CHEBI:15378"/>
        <dbReference type="ChEBI" id="CHEBI:15740"/>
        <dbReference type="ChEBI" id="CHEBI:30616"/>
        <dbReference type="ChEBI" id="CHEBI:43474"/>
        <dbReference type="ChEBI" id="CHEBI:143788"/>
        <dbReference type="ChEBI" id="CHEBI:147286"/>
        <dbReference type="ChEBI" id="CHEBI:456216"/>
        <dbReference type="EC" id="6.3.1.21"/>
    </reaction>
    <physiologicalReaction direction="left-to-right" evidence="1">
        <dbReference type="Rhea" id="RHEA:24830"/>
    </physiologicalReaction>
</comment>
<comment type="pathway">
    <text evidence="1">Purine metabolism; IMP biosynthesis via de novo pathway; N(2)-formyl-N(1)-(5-phospho-D-ribosyl)glycinamide from N(1)-(5-phospho-D-ribosyl)glycinamide (formate route): step 1/1.</text>
</comment>
<comment type="subunit">
    <text evidence="1">Homodimer.</text>
</comment>
<comment type="similarity">
    <text evidence="1">Belongs to the PurK/PurT family.</text>
</comment>
<sequence length="392" mass="42224">MTLLGTALRPAATRVMLLGAGELGKEVAIECQRLGIEVIAVDRYPDAPAMHVAHRSHVINMLDGEALRHVITEEKPHYIVPEIEAIATDTLRELEDEGLNVVPCARATQLTMNREGIRRLAAEELGLPTSTYRFADSEASFHDAVAAVGFPCIVKPVMSSSGKGQSFIRSAEQLAQAWEYAQQGGRAGAGRVIVEGVVKFDFEITLLTVSAVDGVHFCAPVGHRQQDGDYRESWQPQQMSELALKRAQEIARHVVLALGGHGLFGVELFVCGDEVIFSEVSPRPHDTGMVTLISQDLSEFALHVRAFLGMPIGAIRQYGPAASAVILPQLTSQNVTFDDVHAAVGAGVQVRLFGKPEIDGTRRLGVALATGENVEEAVIRAKKAASRVTVKG</sequence>
<reference key="1">
    <citation type="journal article" date="2009" name="PLoS ONE">
        <title>Salmonella paratyphi C: genetic divergence from Salmonella choleraesuis and pathogenic convergence with Salmonella typhi.</title>
        <authorList>
            <person name="Liu W.-Q."/>
            <person name="Feng Y."/>
            <person name="Wang Y."/>
            <person name="Zou Q.-H."/>
            <person name="Chen F."/>
            <person name="Guo J.-T."/>
            <person name="Peng Y.-H."/>
            <person name="Jin Y."/>
            <person name="Li Y.-G."/>
            <person name="Hu S.-N."/>
            <person name="Johnston R.N."/>
            <person name="Liu G.-R."/>
            <person name="Liu S.-L."/>
        </authorList>
    </citation>
    <scope>NUCLEOTIDE SEQUENCE [LARGE SCALE GENOMIC DNA]</scope>
    <source>
        <strain>RKS4594</strain>
    </source>
</reference>
<evidence type="ECO:0000255" key="1">
    <source>
        <dbReference type="HAMAP-Rule" id="MF_01643"/>
    </source>
</evidence>